<organism>
    <name type="scientific">Staphylococcus aureus (strain COL)</name>
    <dbReference type="NCBI Taxonomy" id="93062"/>
    <lineage>
        <taxon>Bacteria</taxon>
        <taxon>Bacillati</taxon>
        <taxon>Bacillota</taxon>
        <taxon>Bacilli</taxon>
        <taxon>Bacillales</taxon>
        <taxon>Staphylococcaceae</taxon>
        <taxon>Staphylococcus</taxon>
    </lineage>
</organism>
<comment type="subcellular location">
    <subcellularLocation>
        <location evidence="1">Cell membrane</location>
        <topology evidence="1">Multi-pass membrane protein</topology>
    </subcellularLocation>
</comment>
<comment type="similarity">
    <text evidence="1">Belongs to the UPF0397 family.</text>
</comment>
<sequence length="184" mass="19840">MKKQDISVKTVVAIGIGAAVFVILGRFVVIPTGFPNTNIETSYAFLALISAIFGPFAGLMTGLVGHAIKDFTTYGSAWWSWVICSGIIGCLYGWIGLKLNLSSGRFSRKSMVYFNIGQIIANIICWALIAPTLDILIYNEPANKVYTQGVISAVLNIISVGIIGTILLKAYASSQIKKGSLRKE</sequence>
<proteinExistence type="inferred from homology"/>
<accession>Q5HCL2</accession>
<evidence type="ECO:0000255" key="1">
    <source>
        <dbReference type="HAMAP-Rule" id="MF_01572"/>
    </source>
</evidence>
<name>Y2709_STAAC</name>
<gene>
    <name type="ordered locus">SACOL2709</name>
</gene>
<feature type="chain" id="PRO_0000260804" description="UPF0397 protein SACOL2709">
    <location>
        <begin position="1"/>
        <end position="184"/>
    </location>
</feature>
<feature type="transmembrane region" description="Helical" evidence="1">
    <location>
        <begin position="11"/>
        <end position="31"/>
    </location>
</feature>
<feature type="transmembrane region" description="Helical" evidence="1">
    <location>
        <begin position="44"/>
        <end position="64"/>
    </location>
</feature>
<feature type="transmembrane region" description="Helical" evidence="1">
    <location>
        <begin position="77"/>
        <end position="97"/>
    </location>
</feature>
<feature type="transmembrane region" description="Helical" evidence="1">
    <location>
        <begin position="116"/>
        <end position="136"/>
    </location>
</feature>
<feature type="transmembrane region" description="Helical" evidence="1">
    <location>
        <begin position="148"/>
        <end position="168"/>
    </location>
</feature>
<keyword id="KW-1003">Cell membrane</keyword>
<keyword id="KW-0472">Membrane</keyword>
<keyword id="KW-0812">Transmembrane</keyword>
<keyword id="KW-1133">Transmembrane helix</keyword>
<dbReference type="EMBL" id="CP000046">
    <property type="protein sequence ID" value="AAW37357.1"/>
    <property type="molecule type" value="Genomic_DNA"/>
</dbReference>
<dbReference type="RefSeq" id="WP_000743717.1">
    <property type="nucleotide sequence ID" value="NZ_JBGOFO010000001.1"/>
</dbReference>
<dbReference type="KEGG" id="sac:SACOL2709"/>
<dbReference type="HOGENOM" id="CLU_120023_0_0_9"/>
<dbReference type="Proteomes" id="UP000000530">
    <property type="component" value="Chromosome"/>
</dbReference>
<dbReference type="GO" id="GO:0005886">
    <property type="term" value="C:plasma membrane"/>
    <property type="evidence" value="ECO:0007669"/>
    <property type="project" value="UniProtKB-SubCell"/>
</dbReference>
<dbReference type="Gene3D" id="1.10.1760.20">
    <property type="match status" value="1"/>
</dbReference>
<dbReference type="HAMAP" id="MF_01572">
    <property type="entry name" value="UPF0397"/>
    <property type="match status" value="1"/>
</dbReference>
<dbReference type="InterPro" id="IPR009825">
    <property type="entry name" value="ECF_substrate-spec-like"/>
</dbReference>
<dbReference type="InterPro" id="IPR022914">
    <property type="entry name" value="UPF0397"/>
</dbReference>
<dbReference type="NCBIfam" id="NF010182">
    <property type="entry name" value="PRK13661.1"/>
    <property type="match status" value="1"/>
</dbReference>
<dbReference type="PANTHER" id="PTHR37815">
    <property type="entry name" value="UPF0397 PROTEIN BC_2624-RELATED"/>
    <property type="match status" value="1"/>
</dbReference>
<dbReference type="PANTHER" id="PTHR37815:SF3">
    <property type="entry name" value="UPF0397 PROTEIN SPR0429"/>
    <property type="match status" value="1"/>
</dbReference>
<dbReference type="Pfam" id="PF07155">
    <property type="entry name" value="ECF-ribofla_trS"/>
    <property type="match status" value="1"/>
</dbReference>
<protein>
    <recommendedName>
        <fullName evidence="1">UPF0397 protein SACOL2709</fullName>
    </recommendedName>
</protein>
<reference key="1">
    <citation type="journal article" date="2005" name="J. Bacteriol.">
        <title>Insights on evolution of virulence and resistance from the complete genome analysis of an early methicillin-resistant Staphylococcus aureus strain and a biofilm-producing methicillin-resistant Staphylococcus epidermidis strain.</title>
        <authorList>
            <person name="Gill S.R."/>
            <person name="Fouts D.E."/>
            <person name="Archer G.L."/>
            <person name="Mongodin E.F."/>
            <person name="DeBoy R.T."/>
            <person name="Ravel J."/>
            <person name="Paulsen I.T."/>
            <person name="Kolonay J.F."/>
            <person name="Brinkac L.M."/>
            <person name="Beanan M.J."/>
            <person name="Dodson R.J."/>
            <person name="Daugherty S.C."/>
            <person name="Madupu R."/>
            <person name="Angiuoli S.V."/>
            <person name="Durkin A.S."/>
            <person name="Haft D.H."/>
            <person name="Vamathevan J.J."/>
            <person name="Khouri H."/>
            <person name="Utterback T.R."/>
            <person name="Lee C."/>
            <person name="Dimitrov G."/>
            <person name="Jiang L."/>
            <person name="Qin H."/>
            <person name="Weidman J."/>
            <person name="Tran K."/>
            <person name="Kang K.H."/>
            <person name="Hance I.R."/>
            <person name="Nelson K.E."/>
            <person name="Fraser C.M."/>
        </authorList>
    </citation>
    <scope>NUCLEOTIDE SEQUENCE [LARGE SCALE GENOMIC DNA]</scope>
    <source>
        <strain>COL</strain>
    </source>
</reference>